<protein>
    <recommendedName>
        <fullName evidence="1">Ketol-acid reductoisomerase (NADP(+))</fullName>
        <shortName evidence="1">KARI</shortName>
        <ecNumber evidence="1">1.1.1.86</ecNumber>
    </recommendedName>
    <alternativeName>
        <fullName evidence="1">Acetohydroxy-acid isomeroreductase</fullName>
        <shortName evidence="1">AHIR</shortName>
    </alternativeName>
    <alternativeName>
        <fullName evidence="1">Alpha-keto-beta-hydroxylacyl reductoisomerase</fullName>
    </alternativeName>
    <alternativeName>
        <fullName evidence="1">Ketol-acid reductoisomerase type 1</fullName>
    </alternativeName>
    <alternativeName>
        <fullName evidence="1">Ketol-acid reductoisomerase type I</fullName>
    </alternativeName>
</protein>
<feature type="chain" id="PRO_1000050564" description="Ketol-acid reductoisomerase (NADP(+))">
    <location>
        <begin position="1"/>
        <end position="328"/>
    </location>
</feature>
<feature type="domain" description="KARI N-terminal Rossmann" evidence="2">
    <location>
        <begin position="2"/>
        <end position="182"/>
    </location>
</feature>
<feature type="domain" description="KARI C-terminal knotted" evidence="3">
    <location>
        <begin position="183"/>
        <end position="328"/>
    </location>
</feature>
<feature type="active site" evidence="1">
    <location>
        <position position="108"/>
    </location>
</feature>
<feature type="binding site" evidence="1">
    <location>
        <begin position="25"/>
        <end position="28"/>
    </location>
    <ligand>
        <name>NADP(+)</name>
        <dbReference type="ChEBI" id="CHEBI:58349"/>
    </ligand>
</feature>
<feature type="binding site" evidence="1">
    <location>
        <position position="48"/>
    </location>
    <ligand>
        <name>NADP(+)</name>
        <dbReference type="ChEBI" id="CHEBI:58349"/>
    </ligand>
</feature>
<feature type="binding site" evidence="1">
    <location>
        <position position="53"/>
    </location>
    <ligand>
        <name>NADP(+)</name>
        <dbReference type="ChEBI" id="CHEBI:58349"/>
    </ligand>
</feature>
<feature type="binding site" evidence="1">
    <location>
        <begin position="83"/>
        <end position="86"/>
    </location>
    <ligand>
        <name>NADP(+)</name>
        <dbReference type="ChEBI" id="CHEBI:58349"/>
    </ligand>
</feature>
<feature type="binding site" evidence="1">
    <location>
        <position position="134"/>
    </location>
    <ligand>
        <name>NADP(+)</name>
        <dbReference type="ChEBI" id="CHEBI:58349"/>
    </ligand>
</feature>
<feature type="binding site" evidence="1">
    <location>
        <position position="191"/>
    </location>
    <ligand>
        <name>Mg(2+)</name>
        <dbReference type="ChEBI" id="CHEBI:18420"/>
        <label>1</label>
    </ligand>
</feature>
<feature type="binding site" evidence="1">
    <location>
        <position position="191"/>
    </location>
    <ligand>
        <name>Mg(2+)</name>
        <dbReference type="ChEBI" id="CHEBI:18420"/>
        <label>2</label>
    </ligand>
</feature>
<feature type="binding site" evidence="1">
    <location>
        <position position="195"/>
    </location>
    <ligand>
        <name>Mg(2+)</name>
        <dbReference type="ChEBI" id="CHEBI:18420"/>
        <label>1</label>
    </ligand>
</feature>
<feature type="binding site" evidence="1">
    <location>
        <position position="227"/>
    </location>
    <ligand>
        <name>Mg(2+)</name>
        <dbReference type="ChEBI" id="CHEBI:18420"/>
        <label>2</label>
    </ligand>
</feature>
<feature type="binding site" evidence="1">
    <location>
        <position position="231"/>
    </location>
    <ligand>
        <name>Mg(2+)</name>
        <dbReference type="ChEBI" id="CHEBI:18420"/>
        <label>2</label>
    </ligand>
</feature>
<feature type="binding site" evidence="1">
    <location>
        <position position="252"/>
    </location>
    <ligand>
        <name>substrate</name>
    </ligand>
</feature>
<organism>
    <name type="scientific">Pyrobaculum arsenaticum (strain DSM 13514 / JCM 11321 / PZ6)</name>
    <dbReference type="NCBI Taxonomy" id="340102"/>
    <lineage>
        <taxon>Archaea</taxon>
        <taxon>Thermoproteota</taxon>
        <taxon>Thermoprotei</taxon>
        <taxon>Thermoproteales</taxon>
        <taxon>Thermoproteaceae</taxon>
        <taxon>Pyrobaculum</taxon>
    </lineage>
</organism>
<sequence length="328" mass="36105">MAKIYRDVDASLEPLKGKTIAVIGYGIQGRAQALNLRDSGLNVILGLRRGGKSWDQAVAEGFRVFEIGQAVAKADVVMVLIPDMEQPKVWEEQIEPNLKPGTVVDFAHGFNIHFGLIKPPPNVDVVMVAPKGPGRAVREEYLSGRGVPALVAVYQNYSGRAMEYALAIAKGIGATRAGVIETTFAEETETDLIGEQTVLVGGLMELIKKGFETLVELGYQPEVAYFEVLNEAKLIMDLIWQRGIYGMLNGVSDTAKYGGLTVGPKIIDESVKQRMREAAARVRSGEFAKEWVTEYNRGGPTLRKLMEEVKNHQIEKVGIEMRRLLFGQ</sequence>
<gene>
    <name evidence="1" type="primary">ilvC</name>
    <name type="ordered locus">Pars_1722</name>
</gene>
<evidence type="ECO:0000255" key="1">
    <source>
        <dbReference type="HAMAP-Rule" id="MF_00435"/>
    </source>
</evidence>
<evidence type="ECO:0000255" key="2">
    <source>
        <dbReference type="PROSITE-ProRule" id="PRU01197"/>
    </source>
</evidence>
<evidence type="ECO:0000255" key="3">
    <source>
        <dbReference type="PROSITE-ProRule" id="PRU01198"/>
    </source>
</evidence>
<reference key="1">
    <citation type="submission" date="2007-04" db="EMBL/GenBank/DDBJ databases">
        <title>Complete sequence of Pyrobaculum arsenaticum DSM 13514.</title>
        <authorList>
            <consortium name="US DOE Joint Genome Institute"/>
            <person name="Copeland A."/>
            <person name="Lucas S."/>
            <person name="Lapidus A."/>
            <person name="Barry K."/>
            <person name="Glavina del Rio T."/>
            <person name="Dalin E."/>
            <person name="Tice H."/>
            <person name="Pitluck S."/>
            <person name="Chain P."/>
            <person name="Malfatti S."/>
            <person name="Shin M."/>
            <person name="Vergez L."/>
            <person name="Schmutz J."/>
            <person name="Larimer F."/>
            <person name="Land M."/>
            <person name="Hauser L."/>
            <person name="Kyrpides N."/>
            <person name="Mikhailova N."/>
            <person name="Cozen A.E."/>
            <person name="Fitz-Gibbon S.T."/>
            <person name="House C.H."/>
            <person name="Saltikov C."/>
            <person name="Lowe T.M."/>
            <person name="Richardson P."/>
        </authorList>
    </citation>
    <scope>NUCLEOTIDE SEQUENCE [LARGE SCALE GENOMIC DNA]</scope>
    <source>
        <strain>ATCC 700994 / DSM 13514 / JCM 11321 / PZ6</strain>
    </source>
</reference>
<comment type="function">
    <text evidence="1">Involved in the biosynthesis of branched-chain amino acids (BCAA). Catalyzes an alkyl-migration followed by a ketol-acid reduction of (S)-2-acetolactate (S2AL) to yield (R)-2,3-dihydroxy-isovalerate. In the isomerase reaction, S2AL is rearranged via a Mg-dependent methyl migration to produce 3-hydroxy-3-methyl-2-ketobutyrate (HMKB). In the reductase reaction, this 2-ketoacid undergoes a metal-dependent reduction by NADPH to yield (R)-2,3-dihydroxy-isovalerate.</text>
</comment>
<comment type="catalytic activity">
    <reaction evidence="1">
        <text>(2R)-2,3-dihydroxy-3-methylbutanoate + NADP(+) = (2S)-2-acetolactate + NADPH + H(+)</text>
        <dbReference type="Rhea" id="RHEA:22068"/>
        <dbReference type="ChEBI" id="CHEBI:15378"/>
        <dbReference type="ChEBI" id="CHEBI:49072"/>
        <dbReference type="ChEBI" id="CHEBI:57783"/>
        <dbReference type="ChEBI" id="CHEBI:58349"/>
        <dbReference type="ChEBI" id="CHEBI:58476"/>
        <dbReference type="EC" id="1.1.1.86"/>
    </reaction>
</comment>
<comment type="catalytic activity">
    <reaction evidence="1">
        <text>(2R,3R)-2,3-dihydroxy-3-methylpentanoate + NADP(+) = (S)-2-ethyl-2-hydroxy-3-oxobutanoate + NADPH + H(+)</text>
        <dbReference type="Rhea" id="RHEA:13493"/>
        <dbReference type="ChEBI" id="CHEBI:15378"/>
        <dbReference type="ChEBI" id="CHEBI:49256"/>
        <dbReference type="ChEBI" id="CHEBI:49258"/>
        <dbReference type="ChEBI" id="CHEBI:57783"/>
        <dbReference type="ChEBI" id="CHEBI:58349"/>
        <dbReference type="EC" id="1.1.1.86"/>
    </reaction>
</comment>
<comment type="cofactor">
    <cofactor evidence="1">
        <name>Mg(2+)</name>
        <dbReference type="ChEBI" id="CHEBI:18420"/>
    </cofactor>
    <text evidence="1">Binds 2 magnesium ions per subunit.</text>
</comment>
<comment type="pathway">
    <text evidence="1">Amino-acid biosynthesis; L-isoleucine biosynthesis; L-isoleucine from 2-oxobutanoate: step 2/4.</text>
</comment>
<comment type="pathway">
    <text evidence="1">Amino-acid biosynthesis; L-valine biosynthesis; L-valine from pyruvate: step 2/4.</text>
</comment>
<comment type="similarity">
    <text evidence="1">Belongs to the ketol-acid reductoisomerase family.</text>
</comment>
<accession>A4WLK6</accession>
<dbReference type="EC" id="1.1.1.86" evidence="1"/>
<dbReference type="EMBL" id="CP000660">
    <property type="protein sequence ID" value="ABP51273.1"/>
    <property type="molecule type" value="Genomic_DNA"/>
</dbReference>
<dbReference type="SMR" id="A4WLK6"/>
<dbReference type="STRING" id="340102.Pars_1722"/>
<dbReference type="KEGG" id="pas:Pars_1722"/>
<dbReference type="HOGENOM" id="CLU_033821_0_1_2"/>
<dbReference type="OrthoDB" id="6064at2157"/>
<dbReference type="PhylomeDB" id="A4WLK6"/>
<dbReference type="UniPathway" id="UPA00047">
    <property type="reaction ID" value="UER00056"/>
</dbReference>
<dbReference type="UniPathway" id="UPA00049">
    <property type="reaction ID" value="UER00060"/>
</dbReference>
<dbReference type="Proteomes" id="UP000001567">
    <property type="component" value="Chromosome"/>
</dbReference>
<dbReference type="GO" id="GO:0004455">
    <property type="term" value="F:ketol-acid reductoisomerase activity"/>
    <property type="evidence" value="ECO:0007669"/>
    <property type="project" value="UniProtKB-UniRule"/>
</dbReference>
<dbReference type="GO" id="GO:0000287">
    <property type="term" value="F:magnesium ion binding"/>
    <property type="evidence" value="ECO:0007669"/>
    <property type="project" value="UniProtKB-UniRule"/>
</dbReference>
<dbReference type="GO" id="GO:0050661">
    <property type="term" value="F:NADP binding"/>
    <property type="evidence" value="ECO:0007669"/>
    <property type="project" value="InterPro"/>
</dbReference>
<dbReference type="GO" id="GO:0009097">
    <property type="term" value="P:isoleucine biosynthetic process"/>
    <property type="evidence" value="ECO:0007669"/>
    <property type="project" value="UniProtKB-UniRule"/>
</dbReference>
<dbReference type="GO" id="GO:0009099">
    <property type="term" value="P:L-valine biosynthetic process"/>
    <property type="evidence" value="ECO:0007669"/>
    <property type="project" value="UniProtKB-UniRule"/>
</dbReference>
<dbReference type="FunFam" id="3.40.50.720:FF:000023">
    <property type="entry name" value="Ketol-acid reductoisomerase (NADP(+))"/>
    <property type="match status" value="1"/>
</dbReference>
<dbReference type="Gene3D" id="6.10.240.10">
    <property type="match status" value="1"/>
</dbReference>
<dbReference type="Gene3D" id="3.40.50.720">
    <property type="entry name" value="NAD(P)-binding Rossmann-like Domain"/>
    <property type="match status" value="1"/>
</dbReference>
<dbReference type="HAMAP" id="MF_00435">
    <property type="entry name" value="IlvC"/>
    <property type="match status" value="1"/>
</dbReference>
<dbReference type="InterPro" id="IPR008927">
    <property type="entry name" value="6-PGluconate_DH-like_C_sf"/>
</dbReference>
<dbReference type="InterPro" id="IPR013023">
    <property type="entry name" value="KARI"/>
</dbReference>
<dbReference type="InterPro" id="IPR000506">
    <property type="entry name" value="KARI_C"/>
</dbReference>
<dbReference type="InterPro" id="IPR013116">
    <property type="entry name" value="KARI_N"/>
</dbReference>
<dbReference type="InterPro" id="IPR014359">
    <property type="entry name" value="KARI_prok"/>
</dbReference>
<dbReference type="InterPro" id="IPR036291">
    <property type="entry name" value="NAD(P)-bd_dom_sf"/>
</dbReference>
<dbReference type="NCBIfam" id="TIGR00465">
    <property type="entry name" value="ilvC"/>
    <property type="match status" value="1"/>
</dbReference>
<dbReference type="NCBIfam" id="NF004017">
    <property type="entry name" value="PRK05479.1"/>
    <property type="match status" value="1"/>
</dbReference>
<dbReference type="PANTHER" id="PTHR21371">
    <property type="entry name" value="KETOL-ACID REDUCTOISOMERASE, MITOCHONDRIAL"/>
    <property type="match status" value="1"/>
</dbReference>
<dbReference type="PANTHER" id="PTHR21371:SF1">
    <property type="entry name" value="KETOL-ACID REDUCTOISOMERASE, MITOCHONDRIAL"/>
    <property type="match status" value="1"/>
</dbReference>
<dbReference type="Pfam" id="PF01450">
    <property type="entry name" value="KARI_C"/>
    <property type="match status" value="1"/>
</dbReference>
<dbReference type="Pfam" id="PF07991">
    <property type="entry name" value="KARI_N"/>
    <property type="match status" value="1"/>
</dbReference>
<dbReference type="PIRSF" id="PIRSF000116">
    <property type="entry name" value="IlvC_gammaproteo"/>
    <property type="match status" value="1"/>
</dbReference>
<dbReference type="SUPFAM" id="SSF48179">
    <property type="entry name" value="6-phosphogluconate dehydrogenase C-terminal domain-like"/>
    <property type="match status" value="1"/>
</dbReference>
<dbReference type="SUPFAM" id="SSF51735">
    <property type="entry name" value="NAD(P)-binding Rossmann-fold domains"/>
    <property type="match status" value="1"/>
</dbReference>
<dbReference type="PROSITE" id="PS51851">
    <property type="entry name" value="KARI_C"/>
    <property type="match status" value="1"/>
</dbReference>
<dbReference type="PROSITE" id="PS51850">
    <property type="entry name" value="KARI_N"/>
    <property type="match status" value="1"/>
</dbReference>
<keyword id="KW-0028">Amino-acid biosynthesis</keyword>
<keyword id="KW-0100">Branched-chain amino acid biosynthesis</keyword>
<keyword id="KW-0460">Magnesium</keyword>
<keyword id="KW-0479">Metal-binding</keyword>
<keyword id="KW-0521">NADP</keyword>
<keyword id="KW-0560">Oxidoreductase</keyword>
<name>ILVC_PYRAR</name>
<proteinExistence type="inferred from homology"/>